<protein>
    <recommendedName>
        <fullName evidence="1">Large ribosomal subunit protein bL21</fullName>
    </recommendedName>
    <alternativeName>
        <fullName evidence="3">50S ribosomal protein L21</fullName>
    </alternativeName>
</protein>
<organism>
    <name type="scientific">Xanthobacter autotrophicus (strain ATCC BAA-1158 / Py2)</name>
    <dbReference type="NCBI Taxonomy" id="78245"/>
    <lineage>
        <taxon>Bacteria</taxon>
        <taxon>Pseudomonadati</taxon>
        <taxon>Pseudomonadota</taxon>
        <taxon>Alphaproteobacteria</taxon>
        <taxon>Hyphomicrobiales</taxon>
        <taxon>Xanthobacteraceae</taxon>
        <taxon>Xanthobacter</taxon>
    </lineage>
</organism>
<dbReference type="EMBL" id="CP000781">
    <property type="protein sequence ID" value="ABS67386.1"/>
    <property type="molecule type" value="Genomic_DNA"/>
</dbReference>
<dbReference type="SMR" id="A7IH93"/>
<dbReference type="STRING" id="78245.Xaut_2142"/>
<dbReference type="KEGG" id="xau:Xaut_2142"/>
<dbReference type="eggNOG" id="COG0261">
    <property type="taxonomic scope" value="Bacteria"/>
</dbReference>
<dbReference type="HOGENOM" id="CLU_061463_3_2_5"/>
<dbReference type="OrthoDB" id="9813334at2"/>
<dbReference type="PhylomeDB" id="A7IH93"/>
<dbReference type="Proteomes" id="UP000002417">
    <property type="component" value="Chromosome"/>
</dbReference>
<dbReference type="GO" id="GO:0005737">
    <property type="term" value="C:cytoplasm"/>
    <property type="evidence" value="ECO:0007669"/>
    <property type="project" value="UniProtKB-ARBA"/>
</dbReference>
<dbReference type="GO" id="GO:1990904">
    <property type="term" value="C:ribonucleoprotein complex"/>
    <property type="evidence" value="ECO:0007669"/>
    <property type="project" value="UniProtKB-KW"/>
</dbReference>
<dbReference type="GO" id="GO:0005840">
    <property type="term" value="C:ribosome"/>
    <property type="evidence" value="ECO:0007669"/>
    <property type="project" value="UniProtKB-KW"/>
</dbReference>
<dbReference type="GO" id="GO:0019843">
    <property type="term" value="F:rRNA binding"/>
    <property type="evidence" value="ECO:0007669"/>
    <property type="project" value="UniProtKB-UniRule"/>
</dbReference>
<dbReference type="GO" id="GO:0003735">
    <property type="term" value="F:structural constituent of ribosome"/>
    <property type="evidence" value="ECO:0007669"/>
    <property type="project" value="InterPro"/>
</dbReference>
<dbReference type="GO" id="GO:0006412">
    <property type="term" value="P:translation"/>
    <property type="evidence" value="ECO:0007669"/>
    <property type="project" value="UniProtKB-UniRule"/>
</dbReference>
<dbReference type="HAMAP" id="MF_01363">
    <property type="entry name" value="Ribosomal_bL21"/>
    <property type="match status" value="1"/>
</dbReference>
<dbReference type="InterPro" id="IPR028909">
    <property type="entry name" value="bL21-like"/>
</dbReference>
<dbReference type="InterPro" id="IPR036164">
    <property type="entry name" value="bL21-like_sf"/>
</dbReference>
<dbReference type="InterPro" id="IPR001787">
    <property type="entry name" value="Ribosomal_bL21"/>
</dbReference>
<dbReference type="NCBIfam" id="TIGR00061">
    <property type="entry name" value="L21"/>
    <property type="match status" value="1"/>
</dbReference>
<dbReference type="PANTHER" id="PTHR21349">
    <property type="entry name" value="50S RIBOSOMAL PROTEIN L21"/>
    <property type="match status" value="1"/>
</dbReference>
<dbReference type="PANTHER" id="PTHR21349:SF0">
    <property type="entry name" value="LARGE RIBOSOMAL SUBUNIT PROTEIN BL21M"/>
    <property type="match status" value="1"/>
</dbReference>
<dbReference type="Pfam" id="PF00829">
    <property type="entry name" value="Ribosomal_L21p"/>
    <property type="match status" value="1"/>
</dbReference>
<dbReference type="SUPFAM" id="SSF141091">
    <property type="entry name" value="L21p-like"/>
    <property type="match status" value="1"/>
</dbReference>
<keyword id="KW-1185">Reference proteome</keyword>
<keyword id="KW-0687">Ribonucleoprotein</keyword>
<keyword id="KW-0689">Ribosomal protein</keyword>
<keyword id="KW-0694">RNA-binding</keyword>
<keyword id="KW-0699">rRNA-binding</keyword>
<comment type="function">
    <text evidence="1">This protein binds to 23S rRNA in the presence of protein L20.</text>
</comment>
<comment type="subunit">
    <text evidence="1">Part of the 50S ribosomal subunit. Contacts protein L20.</text>
</comment>
<comment type="similarity">
    <text evidence="1">Belongs to the bacterial ribosomal protein bL21 family.</text>
</comment>
<sequence length="124" mass="13244">MFAVIKANGKQYRVAAADEITIDHLDAEVGSVFTFPVLMLGGATVAIGAPHVDGATVTGEVVEQTRGDKVIAFKKRRRQNSRRKRGFRADLTVVRITEISGLGETVKAEPKSKRAPAPEAAADA</sequence>
<reference key="1">
    <citation type="submission" date="2007-07" db="EMBL/GenBank/DDBJ databases">
        <title>Complete sequence of chromosome of Xanthobacter autotrophicus Py2.</title>
        <authorList>
            <consortium name="US DOE Joint Genome Institute"/>
            <person name="Copeland A."/>
            <person name="Lucas S."/>
            <person name="Lapidus A."/>
            <person name="Barry K."/>
            <person name="Glavina del Rio T."/>
            <person name="Hammon N."/>
            <person name="Israni S."/>
            <person name="Dalin E."/>
            <person name="Tice H."/>
            <person name="Pitluck S."/>
            <person name="Sims D."/>
            <person name="Brettin T."/>
            <person name="Bruce D."/>
            <person name="Detter J.C."/>
            <person name="Han C."/>
            <person name="Tapia R."/>
            <person name="Brainard J."/>
            <person name="Schmutz J."/>
            <person name="Larimer F."/>
            <person name="Land M."/>
            <person name="Hauser L."/>
            <person name="Kyrpides N."/>
            <person name="Kim E."/>
            <person name="Ensigns S.A."/>
            <person name="Richardson P."/>
        </authorList>
    </citation>
    <scope>NUCLEOTIDE SEQUENCE [LARGE SCALE GENOMIC DNA]</scope>
    <source>
        <strain>ATCC BAA-1158 / Py2</strain>
    </source>
</reference>
<gene>
    <name evidence="1" type="primary">rplU</name>
    <name type="ordered locus">Xaut_2142</name>
</gene>
<feature type="chain" id="PRO_1000143872" description="Large ribosomal subunit protein bL21">
    <location>
        <begin position="1"/>
        <end position="124"/>
    </location>
</feature>
<feature type="region of interest" description="Disordered" evidence="2">
    <location>
        <begin position="105"/>
        <end position="124"/>
    </location>
</feature>
<feature type="compositionally biased region" description="Low complexity" evidence="2">
    <location>
        <begin position="115"/>
        <end position="124"/>
    </location>
</feature>
<accession>A7IH93</accession>
<evidence type="ECO:0000255" key="1">
    <source>
        <dbReference type="HAMAP-Rule" id="MF_01363"/>
    </source>
</evidence>
<evidence type="ECO:0000256" key="2">
    <source>
        <dbReference type="SAM" id="MobiDB-lite"/>
    </source>
</evidence>
<evidence type="ECO:0000305" key="3"/>
<proteinExistence type="inferred from homology"/>
<name>RL21_XANP2</name>